<proteinExistence type="evidence at transcript level"/>
<gene>
    <name type="primary">Slc35b1</name>
</gene>
<keyword id="KW-0050">Antiport</keyword>
<keyword id="KW-0256">Endoplasmic reticulum</keyword>
<keyword id="KW-0472">Membrane</keyword>
<keyword id="KW-1185">Reference proteome</keyword>
<keyword id="KW-0812">Transmembrane</keyword>
<keyword id="KW-1133">Transmembrane helix</keyword>
<keyword id="KW-0813">Transport</keyword>
<evidence type="ECO:0000250" key="1"/>
<evidence type="ECO:0000250" key="2">
    <source>
        <dbReference type="UniProtKB" id="P78383"/>
    </source>
</evidence>
<evidence type="ECO:0000255" key="3"/>
<evidence type="ECO:0000305" key="4"/>
<accession>Q6V7K3</accession>
<accession>P70639</accession>
<sequence>MAASRSLVPDRLRLPLCFLGVFVCYFYYGILQEKITRGKYGEGPKQETFTFALTLVFIQCVINAMFAKILIQFFDTARVDRTRTWLYAACSVSYVGAMVSSNSALQFVNYPTQVLGKSCKPIPVMLLGVTLLKKKYPLAKYLCVLLIVAGVALFMYKPKKVVGIEEHTVGFGELLLLLSLTLDGLTGVSQDHMRAHYQTGSNHMMLNINLWSTVLLGAGILFTGELWEFLSFAERYPTIIYNILLFGLTSALGQSFIFMTVVYFGPLTCSIITTTRKFFTILASVILFANPISSMQWVGTVLVFLGLGLDAKFGKGTKKTSH</sequence>
<organism>
    <name type="scientific">Rattus norvegicus</name>
    <name type="common">Rat</name>
    <dbReference type="NCBI Taxonomy" id="10116"/>
    <lineage>
        <taxon>Eukaryota</taxon>
        <taxon>Metazoa</taxon>
        <taxon>Chordata</taxon>
        <taxon>Craniata</taxon>
        <taxon>Vertebrata</taxon>
        <taxon>Euteleostomi</taxon>
        <taxon>Mammalia</taxon>
        <taxon>Eutheria</taxon>
        <taxon>Euarchontoglires</taxon>
        <taxon>Glires</taxon>
        <taxon>Rodentia</taxon>
        <taxon>Myomorpha</taxon>
        <taxon>Muroidea</taxon>
        <taxon>Muridae</taxon>
        <taxon>Murinae</taxon>
        <taxon>Rattus</taxon>
    </lineage>
</organism>
<protein>
    <recommendedName>
        <fullName>Solute carrier family 35 member B1</fullName>
    </recommendedName>
    <alternativeName>
        <fullName evidence="2">ATP/ADP exchanger ER</fullName>
        <shortName evidence="2">AXER</shortName>
    </alternativeName>
    <alternativeName>
        <fullName evidence="2">Endoplasmic reticulum ATP/ADP translocase</fullName>
    </alternativeName>
    <alternativeName>
        <fullName evidence="2">UDP-galactose transporter-related protein 1</fullName>
        <shortName evidence="2">UGTrel1</shortName>
    </alternativeName>
</protein>
<comment type="function">
    <text evidence="2">ATP:ADP antiporter that catalyzes the exchange of ATP and ADP across the endoplasmic reticulum (ER) membrane. Imports ATP from the cytosol to the ER lumen and exports ADP in the opposite direction. Regulates ER energy metabolism and protein biogenesis. Appears to be part of a calcium-dependent ER to cytosol low energy response axis, where calcium efflux from ER to the cytosol triggers ATP import into the ER lumen to maintain sufficient ATP supply. Provides ATP to ER chaperone HSPA5 that drives protein folding and trafficking in the ER. Can transport dATP, UTP or UDP in exchange for ATP, but the physiological relevance of this process remains to be established.</text>
</comment>
<comment type="catalytic activity">
    <reaction evidence="2">
        <text>ADP(in) + ATP(out) = ADP(out) + ATP(in)</text>
        <dbReference type="Rhea" id="RHEA:34999"/>
        <dbReference type="ChEBI" id="CHEBI:30616"/>
        <dbReference type="ChEBI" id="CHEBI:456216"/>
    </reaction>
    <physiologicalReaction direction="right-to-left" evidence="2">
        <dbReference type="Rhea" id="RHEA:35001"/>
    </physiologicalReaction>
</comment>
<comment type="catalytic activity">
    <reaction evidence="2">
        <text>UDP(out) + ATP(in) = UDP(in) + ATP(out)</text>
        <dbReference type="Rhea" id="RHEA:73707"/>
        <dbReference type="ChEBI" id="CHEBI:30616"/>
        <dbReference type="ChEBI" id="CHEBI:58223"/>
    </reaction>
    <physiologicalReaction direction="left-to-right" evidence="2">
        <dbReference type="Rhea" id="RHEA:73708"/>
    </physiologicalReaction>
</comment>
<comment type="catalytic activity">
    <reaction evidence="2">
        <text>UTP(out) + ATP(in) = UTP(in) + ATP(out)</text>
        <dbReference type="Rhea" id="RHEA:73711"/>
        <dbReference type="ChEBI" id="CHEBI:30616"/>
        <dbReference type="ChEBI" id="CHEBI:46398"/>
    </reaction>
    <physiologicalReaction direction="left-to-right" evidence="2">
        <dbReference type="Rhea" id="RHEA:73712"/>
    </physiologicalReaction>
</comment>
<comment type="catalytic activity">
    <reaction evidence="2">
        <text>dATP(out) + ATP(in) = dATP(in) + ATP(out)</text>
        <dbReference type="Rhea" id="RHEA:73715"/>
        <dbReference type="ChEBI" id="CHEBI:30616"/>
        <dbReference type="ChEBI" id="CHEBI:61404"/>
    </reaction>
    <physiologicalReaction direction="left-to-right" evidence="2">
        <dbReference type="Rhea" id="RHEA:73716"/>
    </physiologicalReaction>
</comment>
<comment type="subcellular location">
    <subcellularLocation>
        <location evidence="2">Endoplasmic reticulum membrane</location>
        <topology evidence="3">Multi-pass membrane protein</topology>
    </subcellularLocation>
</comment>
<comment type="domain">
    <text evidence="1">The di-lysine motif confers endoplasmic reticulum localization for type I membrane proteins.</text>
</comment>
<comment type="similarity">
    <text evidence="4">Belongs to the nucleotide-sugar transporter family. SLC35B subfamily.</text>
</comment>
<name>S35B1_RAT</name>
<feature type="chain" id="PRO_0000213368" description="Solute carrier family 35 member B1">
    <location>
        <begin position="1"/>
        <end position="322"/>
    </location>
</feature>
<feature type="transmembrane region" description="Helical" evidence="3">
    <location>
        <begin position="12"/>
        <end position="32"/>
    </location>
</feature>
<feature type="transmembrane region" description="Helical" evidence="3">
    <location>
        <begin position="51"/>
        <end position="71"/>
    </location>
</feature>
<feature type="transmembrane region" description="Helical" evidence="3">
    <location>
        <begin position="85"/>
        <end position="105"/>
    </location>
</feature>
<feature type="transmembrane region" description="Helical" evidence="3">
    <location>
        <begin position="136"/>
        <end position="156"/>
    </location>
</feature>
<feature type="transmembrane region" description="Helical" evidence="3">
    <location>
        <begin position="168"/>
        <end position="188"/>
    </location>
</feature>
<feature type="transmembrane region" description="Helical" evidence="3">
    <location>
        <begin position="210"/>
        <end position="230"/>
    </location>
</feature>
<feature type="transmembrane region" description="Helical" evidence="3">
    <location>
        <begin position="243"/>
        <end position="263"/>
    </location>
</feature>
<feature type="transmembrane region" description="Helical" evidence="3">
    <location>
        <begin position="285"/>
        <end position="305"/>
    </location>
</feature>
<feature type="short sequence motif" description="Di-lysine motif">
    <location>
        <begin position="318"/>
        <end position="322"/>
    </location>
</feature>
<dbReference type="EMBL" id="D87991">
    <property type="protein sequence ID" value="BAA13527.1"/>
    <property type="molecule type" value="mRNA"/>
</dbReference>
<dbReference type="EMBL" id="AY349135">
    <property type="protein sequence ID" value="AAQ79836.1"/>
    <property type="molecule type" value="mRNA"/>
</dbReference>
<dbReference type="EMBL" id="BC085347">
    <property type="protein sequence ID" value="AAH85347.1"/>
    <property type="molecule type" value="mRNA"/>
</dbReference>
<dbReference type="RefSeq" id="NP_954512.1">
    <property type="nucleotide sequence ID" value="NM_199081.1"/>
</dbReference>
<dbReference type="SMR" id="Q6V7K3"/>
<dbReference type="FunCoup" id="Q6V7K3">
    <property type="interactions" value="1815"/>
</dbReference>
<dbReference type="STRING" id="10116.ENSRNOP00000006179"/>
<dbReference type="PaxDb" id="10116-ENSRNOP00000006179"/>
<dbReference type="GeneID" id="287642"/>
<dbReference type="KEGG" id="rno:287642"/>
<dbReference type="UCSC" id="RGD:727783">
    <property type="organism name" value="rat"/>
</dbReference>
<dbReference type="AGR" id="RGD:727783"/>
<dbReference type="CTD" id="10237"/>
<dbReference type="RGD" id="727783">
    <property type="gene designation" value="Slc35b1"/>
</dbReference>
<dbReference type="eggNOG" id="KOG1580">
    <property type="taxonomic scope" value="Eukaryota"/>
</dbReference>
<dbReference type="HOGENOM" id="CLU_036019_1_0_1"/>
<dbReference type="InParanoid" id="Q6V7K3"/>
<dbReference type="OrthoDB" id="78344at2759"/>
<dbReference type="PhylomeDB" id="Q6V7K3"/>
<dbReference type="TreeFam" id="TF105967"/>
<dbReference type="PRO" id="PR:Q6V7K3"/>
<dbReference type="Proteomes" id="UP000002494">
    <property type="component" value="Unplaced"/>
</dbReference>
<dbReference type="GO" id="GO:0005789">
    <property type="term" value="C:endoplasmic reticulum membrane"/>
    <property type="evidence" value="ECO:0000266"/>
    <property type="project" value="RGD"/>
</dbReference>
<dbReference type="GO" id="GO:0000139">
    <property type="term" value="C:Golgi membrane"/>
    <property type="evidence" value="ECO:0000318"/>
    <property type="project" value="GO_Central"/>
</dbReference>
<dbReference type="GO" id="GO:0005471">
    <property type="term" value="F:ATP:ADP antiporter activity"/>
    <property type="evidence" value="ECO:0000266"/>
    <property type="project" value="RGD"/>
</dbReference>
<dbReference type="GO" id="GO:0005459">
    <property type="term" value="F:UDP-galactose transmembrane transporter activity"/>
    <property type="evidence" value="ECO:0000318"/>
    <property type="project" value="GO_Central"/>
</dbReference>
<dbReference type="GO" id="GO:0005460">
    <property type="term" value="F:UDP-glucose transmembrane transporter activity"/>
    <property type="evidence" value="ECO:0000318"/>
    <property type="project" value="GO_Central"/>
</dbReference>
<dbReference type="GO" id="GO:0072334">
    <property type="term" value="P:UDP-galactose transmembrane transport"/>
    <property type="evidence" value="ECO:0000318"/>
    <property type="project" value="GO_Central"/>
</dbReference>
<dbReference type="Gene3D" id="1.10.3730.20">
    <property type="match status" value="1"/>
</dbReference>
<dbReference type="InterPro" id="IPR013657">
    <property type="entry name" value="SCL35B1-4/HUT1"/>
</dbReference>
<dbReference type="PANTHER" id="PTHR10778">
    <property type="entry name" value="SOLUTE CARRIER FAMILY 35 MEMBER B"/>
    <property type="match status" value="1"/>
</dbReference>
<dbReference type="PANTHER" id="PTHR10778:SF10">
    <property type="entry name" value="SOLUTE CARRIER FAMILY 35 MEMBER B1"/>
    <property type="match status" value="1"/>
</dbReference>
<dbReference type="Pfam" id="PF08449">
    <property type="entry name" value="UAA"/>
    <property type="match status" value="1"/>
</dbReference>
<dbReference type="SUPFAM" id="SSF103481">
    <property type="entry name" value="Multidrug resistance efflux transporter EmrE"/>
    <property type="match status" value="2"/>
</dbReference>
<reference key="1">
    <citation type="journal article" date="1996" name="J. Biochem.">
        <title>Molecular cloning and characterization of a novel isoform of the human UDP-galactose transporter, and of related complementary DNAs belonging to the nucleotide-sugar transporter gene family.</title>
        <authorList>
            <person name="Ishida N."/>
            <person name="Miura N."/>
            <person name="Yoshioka S."/>
            <person name="Kawakita M."/>
        </authorList>
    </citation>
    <scope>NUCLEOTIDE SEQUENCE [MRNA]</scope>
</reference>
<reference key="2">
    <citation type="submission" date="2003-07" db="EMBL/GenBank/DDBJ databases">
        <title>Rattus norvegicus galactose transporter cDNA.</title>
        <authorList>
            <person name="Rydlova H."/>
            <person name="Perez-Marquez J."/>
        </authorList>
    </citation>
    <scope>NUCLEOTIDE SEQUENCE [MRNA]</scope>
    <source>
        <strain>Wistar</strain>
    </source>
</reference>
<reference key="3">
    <citation type="journal article" date="2004" name="Genome Res.">
        <title>The status, quality, and expansion of the NIH full-length cDNA project: the Mammalian Gene Collection (MGC).</title>
        <authorList>
            <consortium name="The MGC Project Team"/>
        </authorList>
    </citation>
    <scope>NUCLEOTIDE SEQUENCE [LARGE SCALE MRNA]</scope>
    <source>
        <tissue>Ovary</tissue>
    </source>
</reference>